<keyword id="KW-1015">Disulfide bond</keyword>
<keyword id="KW-0646">Protease inhibitor</keyword>
<keyword id="KW-0964">Secreted</keyword>
<keyword id="KW-0722">Serine protease inhibitor</keyword>
<keyword id="KW-0732">Signal</keyword>
<organism>
    <name type="scientific">Tropidechis carinatus</name>
    <name type="common">Australian rough-scaled snake</name>
    <dbReference type="NCBI Taxonomy" id="100989"/>
    <lineage>
        <taxon>Eukaryota</taxon>
        <taxon>Metazoa</taxon>
        <taxon>Chordata</taxon>
        <taxon>Craniata</taxon>
        <taxon>Vertebrata</taxon>
        <taxon>Euteleostomi</taxon>
        <taxon>Lepidosauria</taxon>
        <taxon>Squamata</taxon>
        <taxon>Bifurcata</taxon>
        <taxon>Unidentata</taxon>
        <taxon>Episquamata</taxon>
        <taxon>Toxicofera</taxon>
        <taxon>Serpentes</taxon>
        <taxon>Colubroidea</taxon>
        <taxon>Elapidae</taxon>
        <taxon>Notechinae</taxon>
        <taxon>Tropidechis</taxon>
    </lineage>
</organism>
<comment type="function">
    <text evidence="1">Serine protease inhibitor.</text>
</comment>
<comment type="subcellular location">
    <subcellularLocation>
        <location evidence="1">Secreted</location>
    </subcellularLocation>
</comment>
<comment type="tissue specificity">
    <text>Expressed by the venom gland.</text>
</comment>
<comment type="similarity">
    <text evidence="4">Belongs to the venom Kunitz-type family.</text>
</comment>
<name>VKT2_TROCA</name>
<proteinExistence type="evidence at transcript level"/>
<evidence type="ECO:0000250" key="1"/>
<evidence type="ECO:0000255" key="2"/>
<evidence type="ECO:0000255" key="3">
    <source>
        <dbReference type="PROSITE-ProRule" id="PRU00031"/>
    </source>
</evidence>
<evidence type="ECO:0000305" key="4"/>
<feature type="signal peptide" evidence="2">
    <location>
        <begin position="1"/>
        <end position="24"/>
    </location>
</feature>
<feature type="chain" id="PRO_5000395592" description="Kunitz-type serine protease inhibitor carinatin-2">
    <location>
        <begin position="25"/>
        <end position="83"/>
    </location>
</feature>
<feature type="domain" description="BPTI/Kunitz inhibitor" evidence="3">
    <location>
        <begin position="31"/>
        <end position="81"/>
    </location>
</feature>
<feature type="site" description="Reactive bond for trypsin" evidence="1">
    <location>
        <begin position="41"/>
        <end position="42"/>
    </location>
</feature>
<feature type="disulfide bond" evidence="3">
    <location>
        <begin position="31"/>
        <end position="81"/>
    </location>
</feature>
<feature type="disulfide bond" evidence="3">
    <location>
        <begin position="40"/>
        <end position="64"/>
    </location>
</feature>
<feature type="disulfide bond" evidence="3">
    <location>
        <begin position="56"/>
        <end position="77"/>
    </location>
</feature>
<sequence length="83" mass="9178">MSSGGLLLLLGLLTLWEILTPVSSKDHPEFCELPADSGPCRGILHAFYYHPVHRTCLEFIYGGCYGNANNFKTIDECKRTCAA</sequence>
<dbReference type="EMBL" id="EF990741">
    <property type="protein sequence ID" value="ABV64395.1"/>
    <property type="molecule type" value="mRNA"/>
</dbReference>
<dbReference type="EMBL" id="EU401853">
    <property type="protein sequence ID" value="ACC77802.1"/>
    <property type="molecule type" value="Genomic_DNA"/>
</dbReference>
<dbReference type="SMR" id="B5KL33"/>
<dbReference type="MEROPS" id="I02.052"/>
<dbReference type="GO" id="GO:0005615">
    <property type="term" value="C:extracellular space"/>
    <property type="evidence" value="ECO:0007669"/>
    <property type="project" value="TreeGrafter"/>
</dbReference>
<dbReference type="GO" id="GO:0004867">
    <property type="term" value="F:serine-type endopeptidase inhibitor activity"/>
    <property type="evidence" value="ECO:0007669"/>
    <property type="project" value="UniProtKB-KW"/>
</dbReference>
<dbReference type="CDD" id="cd22594">
    <property type="entry name" value="Kunitz_textilinin-like"/>
    <property type="match status" value="1"/>
</dbReference>
<dbReference type="FunFam" id="4.10.410.10:FF:000004">
    <property type="entry name" value="Tissue factor pathway inhibitor"/>
    <property type="match status" value="1"/>
</dbReference>
<dbReference type="Gene3D" id="4.10.410.10">
    <property type="entry name" value="Pancreatic trypsin inhibitor Kunitz domain"/>
    <property type="match status" value="1"/>
</dbReference>
<dbReference type="InterPro" id="IPR002223">
    <property type="entry name" value="Kunitz_BPTI"/>
</dbReference>
<dbReference type="InterPro" id="IPR036880">
    <property type="entry name" value="Kunitz_BPTI_sf"/>
</dbReference>
<dbReference type="InterPro" id="IPR020901">
    <property type="entry name" value="Prtase_inh_Kunz-CS"/>
</dbReference>
<dbReference type="InterPro" id="IPR050098">
    <property type="entry name" value="TFPI/VKTCI-like"/>
</dbReference>
<dbReference type="PANTHER" id="PTHR10083">
    <property type="entry name" value="KUNITZ-TYPE PROTEASE INHIBITOR-RELATED"/>
    <property type="match status" value="1"/>
</dbReference>
<dbReference type="PANTHER" id="PTHR10083:SF376">
    <property type="entry name" value="SERINE PEPTIDASE INHIBITOR, KUNITZ TYPE, 3"/>
    <property type="match status" value="1"/>
</dbReference>
<dbReference type="Pfam" id="PF00014">
    <property type="entry name" value="Kunitz_BPTI"/>
    <property type="match status" value="1"/>
</dbReference>
<dbReference type="PRINTS" id="PR00759">
    <property type="entry name" value="BASICPTASE"/>
</dbReference>
<dbReference type="SMART" id="SM00131">
    <property type="entry name" value="KU"/>
    <property type="match status" value="1"/>
</dbReference>
<dbReference type="SUPFAM" id="SSF57362">
    <property type="entry name" value="BPTI-like"/>
    <property type="match status" value="1"/>
</dbReference>
<dbReference type="PROSITE" id="PS00280">
    <property type="entry name" value="BPTI_KUNITZ_1"/>
    <property type="match status" value="1"/>
</dbReference>
<dbReference type="PROSITE" id="PS50279">
    <property type="entry name" value="BPTI_KUNITZ_2"/>
    <property type="match status" value="1"/>
</dbReference>
<protein>
    <recommendedName>
        <fullName>Kunitz-type serine protease inhibitor carinatin-2</fullName>
    </recommendedName>
</protein>
<reference key="1">
    <citation type="journal article" date="2008" name="Cell. Mol. Life Sci.">
        <title>Common evolution of waprin and Kunitz-like toxin families in Australian venomous snakes.</title>
        <authorList>
            <person name="St Pierre L."/>
            <person name="Earl S.T."/>
            <person name="Filippovich I."/>
            <person name="Sorokina N."/>
            <person name="Masci P.P."/>
            <person name="De Jersey J."/>
            <person name="Lavin M.F."/>
        </authorList>
    </citation>
    <scope>NUCLEOTIDE SEQUENCE [GENOMIC DNA / MRNA]</scope>
    <source>
        <tissue>Venom gland</tissue>
    </source>
</reference>
<accession>B5KL33</accession>